<dbReference type="EC" id="6.1.1.11" evidence="1"/>
<dbReference type="EMBL" id="CP000857">
    <property type="protein sequence ID" value="ACN45130.1"/>
    <property type="molecule type" value="Genomic_DNA"/>
</dbReference>
<dbReference type="RefSeq" id="WP_000887397.1">
    <property type="nucleotide sequence ID" value="NC_012125.1"/>
</dbReference>
<dbReference type="SMR" id="C0PXT0"/>
<dbReference type="KEGG" id="sei:SPC_0963"/>
<dbReference type="HOGENOM" id="CLU_023797_1_1_6"/>
<dbReference type="UniPathway" id="UPA00906">
    <property type="reaction ID" value="UER00895"/>
</dbReference>
<dbReference type="Proteomes" id="UP000001599">
    <property type="component" value="Chromosome"/>
</dbReference>
<dbReference type="GO" id="GO:0005737">
    <property type="term" value="C:cytoplasm"/>
    <property type="evidence" value="ECO:0007669"/>
    <property type="project" value="UniProtKB-SubCell"/>
</dbReference>
<dbReference type="GO" id="GO:0005524">
    <property type="term" value="F:ATP binding"/>
    <property type="evidence" value="ECO:0007669"/>
    <property type="project" value="UniProtKB-UniRule"/>
</dbReference>
<dbReference type="GO" id="GO:0004828">
    <property type="term" value="F:serine-tRNA ligase activity"/>
    <property type="evidence" value="ECO:0007669"/>
    <property type="project" value="UniProtKB-UniRule"/>
</dbReference>
<dbReference type="GO" id="GO:0016260">
    <property type="term" value="P:selenocysteine biosynthetic process"/>
    <property type="evidence" value="ECO:0007669"/>
    <property type="project" value="UniProtKB-UniRule"/>
</dbReference>
<dbReference type="GO" id="GO:0006434">
    <property type="term" value="P:seryl-tRNA aminoacylation"/>
    <property type="evidence" value="ECO:0007669"/>
    <property type="project" value="UniProtKB-UniRule"/>
</dbReference>
<dbReference type="CDD" id="cd00770">
    <property type="entry name" value="SerRS_core"/>
    <property type="match status" value="1"/>
</dbReference>
<dbReference type="FunFam" id="1.10.287.40:FF:000001">
    <property type="entry name" value="Serine--tRNA ligase"/>
    <property type="match status" value="1"/>
</dbReference>
<dbReference type="FunFam" id="3.30.930.10:FF:000018">
    <property type="entry name" value="Serine--tRNA ligase"/>
    <property type="match status" value="1"/>
</dbReference>
<dbReference type="Gene3D" id="3.30.930.10">
    <property type="entry name" value="Bira Bifunctional Protein, Domain 2"/>
    <property type="match status" value="1"/>
</dbReference>
<dbReference type="Gene3D" id="1.10.287.40">
    <property type="entry name" value="Serine-tRNA synthetase, tRNA binding domain"/>
    <property type="match status" value="1"/>
</dbReference>
<dbReference type="HAMAP" id="MF_00176">
    <property type="entry name" value="Ser_tRNA_synth_type1"/>
    <property type="match status" value="1"/>
</dbReference>
<dbReference type="InterPro" id="IPR002314">
    <property type="entry name" value="aa-tRNA-synt_IIb"/>
</dbReference>
<dbReference type="InterPro" id="IPR006195">
    <property type="entry name" value="aa-tRNA-synth_II"/>
</dbReference>
<dbReference type="InterPro" id="IPR045864">
    <property type="entry name" value="aa-tRNA-synth_II/BPL/LPL"/>
</dbReference>
<dbReference type="InterPro" id="IPR002317">
    <property type="entry name" value="Ser-tRNA-ligase_type_1"/>
</dbReference>
<dbReference type="InterPro" id="IPR015866">
    <property type="entry name" value="Ser-tRNA-synth_1_N"/>
</dbReference>
<dbReference type="InterPro" id="IPR042103">
    <property type="entry name" value="SerRS_1_N_sf"/>
</dbReference>
<dbReference type="InterPro" id="IPR033729">
    <property type="entry name" value="SerRS_core"/>
</dbReference>
<dbReference type="InterPro" id="IPR010978">
    <property type="entry name" value="tRNA-bd_arm"/>
</dbReference>
<dbReference type="NCBIfam" id="TIGR00414">
    <property type="entry name" value="serS"/>
    <property type="match status" value="1"/>
</dbReference>
<dbReference type="PANTHER" id="PTHR43697:SF1">
    <property type="entry name" value="SERINE--TRNA LIGASE"/>
    <property type="match status" value="1"/>
</dbReference>
<dbReference type="PANTHER" id="PTHR43697">
    <property type="entry name" value="SERYL-TRNA SYNTHETASE"/>
    <property type="match status" value="1"/>
</dbReference>
<dbReference type="Pfam" id="PF02403">
    <property type="entry name" value="Seryl_tRNA_N"/>
    <property type="match status" value="1"/>
</dbReference>
<dbReference type="Pfam" id="PF00587">
    <property type="entry name" value="tRNA-synt_2b"/>
    <property type="match status" value="1"/>
</dbReference>
<dbReference type="PIRSF" id="PIRSF001529">
    <property type="entry name" value="Ser-tRNA-synth_IIa"/>
    <property type="match status" value="1"/>
</dbReference>
<dbReference type="PRINTS" id="PR00981">
    <property type="entry name" value="TRNASYNTHSER"/>
</dbReference>
<dbReference type="SUPFAM" id="SSF55681">
    <property type="entry name" value="Class II aaRS and biotin synthetases"/>
    <property type="match status" value="1"/>
</dbReference>
<dbReference type="SUPFAM" id="SSF46589">
    <property type="entry name" value="tRNA-binding arm"/>
    <property type="match status" value="1"/>
</dbReference>
<dbReference type="PROSITE" id="PS50862">
    <property type="entry name" value="AA_TRNA_LIGASE_II"/>
    <property type="match status" value="1"/>
</dbReference>
<accession>C0PXT0</accession>
<feature type="chain" id="PRO_1000199501" description="Serine--tRNA ligase">
    <location>
        <begin position="1"/>
        <end position="430"/>
    </location>
</feature>
<feature type="binding site" evidence="1">
    <location>
        <begin position="237"/>
        <end position="239"/>
    </location>
    <ligand>
        <name>L-serine</name>
        <dbReference type="ChEBI" id="CHEBI:33384"/>
    </ligand>
</feature>
<feature type="binding site" evidence="1">
    <location>
        <begin position="268"/>
        <end position="270"/>
    </location>
    <ligand>
        <name>ATP</name>
        <dbReference type="ChEBI" id="CHEBI:30616"/>
    </ligand>
</feature>
<feature type="binding site" evidence="1">
    <location>
        <position position="291"/>
    </location>
    <ligand>
        <name>L-serine</name>
        <dbReference type="ChEBI" id="CHEBI:33384"/>
    </ligand>
</feature>
<feature type="binding site" evidence="1">
    <location>
        <begin position="355"/>
        <end position="358"/>
    </location>
    <ligand>
        <name>ATP</name>
        <dbReference type="ChEBI" id="CHEBI:30616"/>
    </ligand>
</feature>
<feature type="binding site" evidence="1">
    <location>
        <position position="391"/>
    </location>
    <ligand>
        <name>L-serine</name>
        <dbReference type="ChEBI" id="CHEBI:33384"/>
    </ligand>
</feature>
<gene>
    <name evidence="1" type="primary">serS</name>
    <name type="ordered locus">SPC_0963</name>
</gene>
<protein>
    <recommendedName>
        <fullName evidence="1">Serine--tRNA ligase</fullName>
        <ecNumber evidence="1">6.1.1.11</ecNumber>
    </recommendedName>
    <alternativeName>
        <fullName evidence="1">Seryl-tRNA synthetase</fullName>
        <shortName evidence="1">SerRS</shortName>
    </alternativeName>
    <alternativeName>
        <fullName evidence="1">Seryl-tRNA(Ser/Sec) synthetase</fullName>
    </alternativeName>
</protein>
<keyword id="KW-0030">Aminoacyl-tRNA synthetase</keyword>
<keyword id="KW-0067">ATP-binding</keyword>
<keyword id="KW-0963">Cytoplasm</keyword>
<keyword id="KW-0436">Ligase</keyword>
<keyword id="KW-0547">Nucleotide-binding</keyword>
<keyword id="KW-0648">Protein biosynthesis</keyword>
<proteinExistence type="inferred from homology"/>
<comment type="function">
    <text evidence="1">Catalyzes the attachment of serine to tRNA(Ser). Is also able to aminoacylate tRNA(Sec) with serine, to form the misacylated tRNA L-seryl-tRNA(Sec), which will be further converted into selenocysteinyl-tRNA(Sec).</text>
</comment>
<comment type="catalytic activity">
    <reaction evidence="1">
        <text>tRNA(Ser) + L-serine + ATP = L-seryl-tRNA(Ser) + AMP + diphosphate + H(+)</text>
        <dbReference type="Rhea" id="RHEA:12292"/>
        <dbReference type="Rhea" id="RHEA-COMP:9669"/>
        <dbReference type="Rhea" id="RHEA-COMP:9703"/>
        <dbReference type="ChEBI" id="CHEBI:15378"/>
        <dbReference type="ChEBI" id="CHEBI:30616"/>
        <dbReference type="ChEBI" id="CHEBI:33019"/>
        <dbReference type="ChEBI" id="CHEBI:33384"/>
        <dbReference type="ChEBI" id="CHEBI:78442"/>
        <dbReference type="ChEBI" id="CHEBI:78533"/>
        <dbReference type="ChEBI" id="CHEBI:456215"/>
        <dbReference type="EC" id="6.1.1.11"/>
    </reaction>
</comment>
<comment type="catalytic activity">
    <reaction evidence="1">
        <text>tRNA(Sec) + L-serine + ATP = L-seryl-tRNA(Sec) + AMP + diphosphate + H(+)</text>
        <dbReference type="Rhea" id="RHEA:42580"/>
        <dbReference type="Rhea" id="RHEA-COMP:9742"/>
        <dbReference type="Rhea" id="RHEA-COMP:10128"/>
        <dbReference type="ChEBI" id="CHEBI:15378"/>
        <dbReference type="ChEBI" id="CHEBI:30616"/>
        <dbReference type="ChEBI" id="CHEBI:33019"/>
        <dbReference type="ChEBI" id="CHEBI:33384"/>
        <dbReference type="ChEBI" id="CHEBI:78442"/>
        <dbReference type="ChEBI" id="CHEBI:78533"/>
        <dbReference type="ChEBI" id="CHEBI:456215"/>
        <dbReference type="EC" id="6.1.1.11"/>
    </reaction>
</comment>
<comment type="pathway">
    <text evidence="1">Aminoacyl-tRNA biosynthesis; selenocysteinyl-tRNA(Sec) biosynthesis; L-seryl-tRNA(Sec) from L-serine and tRNA(Sec): step 1/1.</text>
</comment>
<comment type="subunit">
    <text evidence="1">Homodimer. The tRNA molecule binds across the dimer.</text>
</comment>
<comment type="subcellular location">
    <subcellularLocation>
        <location evidence="1">Cytoplasm</location>
    </subcellularLocation>
</comment>
<comment type="domain">
    <text evidence="1">Consists of two distinct domains, a catalytic core and a N-terminal extension that is involved in tRNA binding.</text>
</comment>
<comment type="similarity">
    <text evidence="1">Belongs to the class-II aminoacyl-tRNA synthetase family. Type-1 seryl-tRNA synthetase subfamily.</text>
</comment>
<evidence type="ECO:0000255" key="1">
    <source>
        <dbReference type="HAMAP-Rule" id="MF_00176"/>
    </source>
</evidence>
<organism>
    <name type="scientific">Salmonella paratyphi C (strain RKS4594)</name>
    <dbReference type="NCBI Taxonomy" id="476213"/>
    <lineage>
        <taxon>Bacteria</taxon>
        <taxon>Pseudomonadati</taxon>
        <taxon>Pseudomonadota</taxon>
        <taxon>Gammaproteobacteria</taxon>
        <taxon>Enterobacterales</taxon>
        <taxon>Enterobacteriaceae</taxon>
        <taxon>Salmonella</taxon>
    </lineage>
</organism>
<sequence length="430" mass="48570">MLDSNLLRNEPDAVAEKLARRGFKLDVDKLRALEERRKVLQVNTENLQAERNSRSKSIGQAKARGEDIEPLRLEVNKLGEELDAAKAELDTLLAEIRDIALTIPNLPADEVPVGKDENDNVEVSRWGTPREFDFEIRDHVTLGEMHSGLDFAAAVKLTGSRFVVMKGQIARMHRALSQFMLDLHTEQHGYSENYVPYLVNHDTLYGTGQLPKFAGDLFHTRPLEEEADSSNYALIPTAEVPLTNLVRDEIIDEDQLPIKMTAHTPCFRSEAGSYGRDTRGLIRMHQFDKVEMVQIVRPEDSMAALEEMTGHAEKVLQLLGLPYRKIILCTGDMGFGACKTYDLEVWVPAQNTYREISSCSNVWDFQARRMQARCRSKSDKKTRLVHTLNGSGLAVGRTLVAVMENYQQADGRIEVPEVLRPYMNGLEYIG</sequence>
<reference key="1">
    <citation type="journal article" date="2009" name="PLoS ONE">
        <title>Salmonella paratyphi C: genetic divergence from Salmonella choleraesuis and pathogenic convergence with Salmonella typhi.</title>
        <authorList>
            <person name="Liu W.-Q."/>
            <person name="Feng Y."/>
            <person name="Wang Y."/>
            <person name="Zou Q.-H."/>
            <person name="Chen F."/>
            <person name="Guo J.-T."/>
            <person name="Peng Y.-H."/>
            <person name="Jin Y."/>
            <person name="Li Y.-G."/>
            <person name="Hu S.-N."/>
            <person name="Johnston R.N."/>
            <person name="Liu G.-R."/>
            <person name="Liu S.-L."/>
        </authorList>
    </citation>
    <scope>NUCLEOTIDE SEQUENCE [LARGE SCALE GENOMIC DNA]</scope>
    <source>
        <strain>RKS4594</strain>
    </source>
</reference>
<name>SYS_SALPC</name>